<accession>P0A8L5</accession>
<accession>P76005</accession>
<accession>Q9R3F1</accession>
<evidence type="ECO:0000305" key="1"/>
<dbReference type="EMBL" id="U00096">
    <property type="protein sequence ID" value="AAC74265.3"/>
    <property type="molecule type" value="Genomic_DNA"/>
</dbReference>
<dbReference type="EMBL" id="AP009048">
    <property type="protein sequence ID" value="BAA36015.2"/>
    <property type="status" value="ALT_INIT"/>
    <property type="molecule type" value="Genomic_DNA"/>
</dbReference>
<dbReference type="RefSeq" id="NP_415699.5">
    <property type="nucleotide sequence ID" value="NC_000913.3"/>
</dbReference>
<dbReference type="BioGRID" id="4262873">
    <property type="interactions" value="13"/>
</dbReference>
<dbReference type="FunCoup" id="P0A8L5">
    <property type="interactions" value="63"/>
</dbReference>
<dbReference type="STRING" id="511145.b1181"/>
<dbReference type="jPOST" id="P0A8L5"/>
<dbReference type="PaxDb" id="511145-b1181"/>
<dbReference type="DNASU" id="945804"/>
<dbReference type="EnsemblBacteria" id="AAC74265">
    <property type="protein sequence ID" value="AAC74265"/>
    <property type="gene ID" value="b1181"/>
</dbReference>
<dbReference type="GeneID" id="945804"/>
<dbReference type="KEGG" id="ecj:JW5180"/>
<dbReference type="KEGG" id="eco:b1181"/>
<dbReference type="KEGG" id="ecoc:C3026_06960"/>
<dbReference type="PATRIC" id="fig|511145.12.peg.1226"/>
<dbReference type="EchoBASE" id="EB3654"/>
<dbReference type="eggNOG" id="COG2983">
    <property type="taxonomic scope" value="Bacteria"/>
</dbReference>
<dbReference type="HOGENOM" id="CLU_109769_0_1_6"/>
<dbReference type="InParanoid" id="P0A8L5"/>
<dbReference type="OMA" id="TCQCSDY"/>
<dbReference type="OrthoDB" id="9786855at2"/>
<dbReference type="PhylomeDB" id="P0A8L5"/>
<dbReference type="BioCyc" id="EcoCyc:G6618-MONOMER"/>
<dbReference type="PRO" id="PR:P0A8L5"/>
<dbReference type="Proteomes" id="UP000000625">
    <property type="component" value="Chromosome"/>
</dbReference>
<dbReference type="HAMAP" id="MF_00676">
    <property type="entry name" value="UPF0260"/>
    <property type="match status" value="1"/>
</dbReference>
<dbReference type="InterPro" id="IPR005358">
    <property type="entry name" value="Puta_zinc/iron-chelating_dom"/>
</dbReference>
<dbReference type="InterPro" id="IPR008228">
    <property type="entry name" value="UCP006173"/>
</dbReference>
<dbReference type="NCBIfam" id="NF003498">
    <property type="entry name" value="PRK05170.1-1"/>
    <property type="match status" value="1"/>
</dbReference>
<dbReference type="NCBIfam" id="NF003501">
    <property type="entry name" value="PRK05170.1-5"/>
    <property type="match status" value="1"/>
</dbReference>
<dbReference type="NCBIfam" id="NF003503">
    <property type="entry name" value="PRK05170.2-1"/>
    <property type="match status" value="1"/>
</dbReference>
<dbReference type="NCBIfam" id="NF003507">
    <property type="entry name" value="PRK05170.2-5"/>
    <property type="match status" value="1"/>
</dbReference>
<dbReference type="PANTHER" id="PTHR37421">
    <property type="entry name" value="UPF0260 PROTEIN YCGN"/>
    <property type="match status" value="1"/>
</dbReference>
<dbReference type="PANTHER" id="PTHR37421:SF1">
    <property type="entry name" value="UPF0260 PROTEIN YCGN"/>
    <property type="match status" value="1"/>
</dbReference>
<dbReference type="Pfam" id="PF03692">
    <property type="entry name" value="CxxCxxCC"/>
    <property type="match status" value="1"/>
</dbReference>
<dbReference type="PIRSF" id="PIRSF006173">
    <property type="entry name" value="UCP006173"/>
    <property type="match status" value="1"/>
</dbReference>
<comment type="similarity">
    <text evidence="1">Belongs to the UPF0260 family.</text>
</comment>
<comment type="sequence caution" evidence="1">
    <conflict type="erroneous initiation">
        <sequence resource="EMBL-CDS" id="BAA36015"/>
    </conflict>
</comment>
<name>YCGN_ECOLI</name>
<sequence>MAEHLMSDVPFWQSKTLDEMSDAEWESLCDGCGQCCLHKLMDEDTDEIYFTNVACRQLNIKTCQCRNYERRFEFEPDCIKLTRENLPTFEWLPMTCAYRLLAEGKDLPAWHPLLTGSKAAMHGERISVRHIAVKESEVIDWQDHILNKPDWAQ</sequence>
<organism>
    <name type="scientific">Escherichia coli (strain K12)</name>
    <dbReference type="NCBI Taxonomy" id="83333"/>
    <lineage>
        <taxon>Bacteria</taxon>
        <taxon>Pseudomonadati</taxon>
        <taxon>Pseudomonadota</taxon>
        <taxon>Gammaproteobacteria</taxon>
        <taxon>Enterobacterales</taxon>
        <taxon>Enterobacteriaceae</taxon>
        <taxon>Escherichia</taxon>
    </lineage>
</organism>
<protein>
    <recommendedName>
        <fullName>UPF0260 protein YcgN</fullName>
    </recommendedName>
</protein>
<keyword id="KW-1185">Reference proteome</keyword>
<proteinExistence type="inferred from homology"/>
<reference key="1">
    <citation type="journal article" date="1996" name="DNA Res.">
        <title>A 718-kb DNA sequence of the Escherichia coli K-12 genome corresponding to the 12.7-28.0 min region on the linkage map.</title>
        <authorList>
            <person name="Oshima T."/>
            <person name="Aiba H."/>
            <person name="Baba T."/>
            <person name="Fujita K."/>
            <person name="Hayashi K."/>
            <person name="Honjo A."/>
            <person name="Ikemoto K."/>
            <person name="Inada T."/>
            <person name="Itoh T."/>
            <person name="Kajihara M."/>
            <person name="Kanai K."/>
            <person name="Kashimoto K."/>
            <person name="Kimura S."/>
            <person name="Kitagawa M."/>
            <person name="Makino K."/>
            <person name="Masuda S."/>
            <person name="Miki T."/>
            <person name="Mizobuchi K."/>
            <person name="Mori H."/>
            <person name="Motomura K."/>
            <person name="Nakamura Y."/>
            <person name="Nashimoto H."/>
            <person name="Nishio Y."/>
            <person name="Saito N."/>
            <person name="Sampei G."/>
            <person name="Seki Y."/>
            <person name="Tagami H."/>
            <person name="Takemoto K."/>
            <person name="Wada C."/>
            <person name="Yamamoto Y."/>
            <person name="Yano M."/>
            <person name="Horiuchi T."/>
        </authorList>
    </citation>
    <scope>NUCLEOTIDE SEQUENCE [LARGE SCALE GENOMIC DNA]</scope>
    <source>
        <strain>K12 / W3110 / ATCC 27325 / DSM 5911</strain>
    </source>
</reference>
<reference key="2">
    <citation type="journal article" date="1997" name="Science">
        <title>The complete genome sequence of Escherichia coli K-12.</title>
        <authorList>
            <person name="Blattner F.R."/>
            <person name="Plunkett G. III"/>
            <person name="Bloch C.A."/>
            <person name="Perna N.T."/>
            <person name="Burland V."/>
            <person name="Riley M."/>
            <person name="Collado-Vides J."/>
            <person name="Glasner J.D."/>
            <person name="Rode C.K."/>
            <person name="Mayhew G.F."/>
            <person name="Gregor J."/>
            <person name="Davis N.W."/>
            <person name="Kirkpatrick H.A."/>
            <person name="Goeden M.A."/>
            <person name="Rose D.J."/>
            <person name="Mau B."/>
            <person name="Shao Y."/>
        </authorList>
    </citation>
    <scope>NUCLEOTIDE SEQUENCE [LARGE SCALE GENOMIC DNA]</scope>
    <source>
        <strain>K12 / MG1655 / ATCC 47076</strain>
    </source>
</reference>
<reference key="3">
    <citation type="journal article" date="2006" name="Mol. Syst. Biol.">
        <title>Highly accurate genome sequences of Escherichia coli K-12 strains MG1655 and W3110.</title>
        <authorList>
            <person name="Hayashi K."/>
            <person name="Morooka N."/>
            <person name="Yamamoto Y."/>
            <person name="Fujita K."/>
            <person name="Isono K."/>
            <person name="Choi S."/>
            <person name="Ohtsubo E."/>
            <person name="Baba T."/>
            <person name="Wanner B.L."/>
            <person name="Mori H."/>
            <person name="Horiuchi T."/>
        </authorList>
    </citation>
    <scope>NUCLEOTIDE SEQUENCE [LARGE SCALE GENOMIC DNA]</scope>
    <source>
        <strain>K12 / W3110 / ATCC 27325 / DSM 5911</strain>
    </source>
</reference>
<feature type="chain" id="PRO_0000214579" description="UPF0260 protein YcgN">
    <location>
        <begin position="1"/>
        <end position="153"/>
    </location>
</feature>
<gene>
    <name type="primary">ycgN</name>
    <name type="ordered locus">b1181</name>
    <name type="ordered locus">JW5180</name>
</gene>